<reference key="1">
    <citation type="journal article" date="2004" name="Proc. Natl. Acad. Sci. U.S.A.">
        <title>Structural flexibility in the Burkholderia mallei genome.</title>
        <authorList>
            <person name="Nierman W.C."/>
            <person name="DeShazer D."/>
            <person name="Kim H.S."/>
            <person name="Tettelin H."/>
            <person name="Nelson K.E."/>
            <person name="Feldblyum T.V."/>
            <person name="Ulrich R.L."/>
            <person name="Ronning C.M."/>
            <person name="Brinkac L.M."/>
            <person name="Daugherty S.C."/>
            <person name="Davidsen T.D."/>
            <person name="DeBoy R.T."/>
            <person name="Dimitrov G."/>
            <person name="Dodson R.J."/>
            <person name="Durkin A.S."/>
            <person name="Gwinn M.L."/>
            <person name="Haft D.H."/>
            <person name="Khouri H.M."/>
            <person name="Kolonay J.F."/>
            <person name="Madupu R."/>
            <person name="Mohammoud Y."/>
            <person name="Nelson W.C."/>
            <person name="Radune D."/>
            <person name="Romero C.M."/>
            <person name="Sarria S."/>
            <person name="Selengut J."/>
            <person name="Shamblin C."/>
            <person name="Sullivan S.A."/>
            <person name="White O."/>
            <person name="Yu Y."/>
            <person name="Zafar N."/>
            <person name="Zhou L."/>
            <person name="Fraser C.M."/>
        </authorList>
    </citation>
    <scope>NUCLEOTIDE SEQUENCE [LARGE SCALE GENOMIC DNA]</scope>
    <source>
        <strain>ATCC 23344</strain>
    </source>
</reference>
<keyword id="KW-0456">Lyase</keyword>
<keyword id="KW-1185">Reference proteome</keyword>
<accession>Q62FU4</accession>
<gene>
    <name type="ordered locus">BMA2926</name>
</gene>
<protein>
    <recommendedName>
        <fullName evidence="1">Putative pterin-4-alpha-carbinolamine dehydratase</fullName>
        <shortName evidence="1">PHS</shortName>
        <ecNumber evidence="1">4.2.1.96</ecNumber>
    </recommendedName>
    <alternativeName>
        <fullName evidence="1">4-alpha-hydroxy-tetrahydropterin dehydratase</fullName>
    </alternativeName>
    <alternativeName>
        <fullName evidence="1">Pterin carbinolamine dehydratase</fullName>
        <shortName evidence="1">PCD</shortName>
    </alternativeName>
</protein>
<proteinExistence type="inferred from homology"/>
<feature type="chain" id="PRO_0000231443" description="Putative pterin-4-alpha-carbinolamine dehydratase">
    <location>
        <begin position="1"/>
        <end position="101"/>
    </location>
</feature>
<comment type="catalytic activity">
    <reaction evidence="1">
        <text>(4aS,6R)-4a-hydroxy-L-erythro-5,6,7,8-tetrahydrobiopterin = (6R)-L-erythro-6,7-dihydrobiopterin + H2O</text>
        <dbReference type="Rhea" id="RHEA:11920"/>
        <dbReference type="ChEBI" id="CHEBI:15377"/>
        <dbReference type="ChEBI" id="CHEBI:15642"/>
        <dbReference type="ChEBI" id="CHEBI:43120"/>
        <dbReference type="EC" id="4.2.1.96"/>
    </reaction>
</comment>
<comment type="similarity">
    <text evidence="1">Belongs to the pterin-4-alpha-carbinolamine dehydratase family.</text>
</comment>
<name>PHS_BURMA</name>
<sequence length="101" mass="11681">MIHKLTSEERKTQLESLHHWTAVPGRDAIQRSLRFADFNEAFGFMTRVAIKAQEMNHHPEWFNVYNRVDVTLSTHDANGLTERDIKLAHFIDEVGKHAKAA</sequence>
<dbReference type="EC" id="4.2.1.96" evidence="1"/>
<dbReference type="EMBL" id="CP000010">
    <property type="protein sequence ID" value="AAU48004.1"/>
    <property type="molecule type" value="Genomic_DNA"/>
</dbReference>
<dbReference type="RefSeq" id="WP_004201313.1">
    <property type="nucleotide sequence ID" value="NC_006348.1"/>
</dbReference>
<dbReference type="RefSeq" id="YP_104433.1">
    <property type="nucleotide sequence ID" value="NC_006348.1"/>
</dbReference>
<dbReference type="SMR" id="Q62FU4"/>
<dbReference type="KEGG" id="bma:BMA2926"/>
<dbReference type="PATRIC" id="fig|243160.12.peg.2995"/>
<dbReference type="eggNOG" id="COG2154">
    <property type="taxonomic scope" value="Bacteria"/>
</dbReference>
<dbReference type="HOGENOM" id="CLU_081974_3_2_4"/>
<dbReference type="Proteomes" id="UP000006693">
    <property type="component" value="Chromosome 1"/>
</dbReference>
<dbReference type="GO" id="GO:0008124">
    <property type="term" value="F:4-alpha-hydroxytetrahydrobiopterin dehydratase activity"/>
    <property type="evidence" value="ECO:0007669"/>
    <property type="project" value="UniProtKB-UniRule"/>
</dbReference>
<dbReference type="GO" id="GO:0006729">
    <property type="term" value="P:tetrahydrobiopterin biosynthetic process"/>
    <property type="evidence" value="ECO:0007669"/>
    <property type="project" value="InterPro"/>
</dbReference>
<dbReference type="CDD" id="cd00914">
    <property type="entry name" value="PCD_DCoH_subfamily_b"/>
    <property type="match status" value="1"/>
</dbReference>
<dbReference type="Gene3D" id="3.30.1360.20">
    <property type="entry name" value="Transcriptional coactivator/pterin dehydratase"/>
    <property type="match status" value="1"/>
</dbReference>
<dbReference type="HAMAP" id="MF_00434">
    <property type="entry name" value="Pterin_4_alpha"/>
    <property type="match status" value="1"/>
</dbReference>
<dbReference type="InterPro" id="IPR036428">
    <property type="entry name" value="PCD_sf"/>
</dbReference>
<dbReference type="InterPro" id="IPR001533">
    <property type="entry name" value="Pterin_deHydtase"/>
</dbReference>
<dbReference type="NCBIfam" id="NF002017">
    <property type="entry name" value="PRK00823.1-2"/>
    <property type="match status" value="1"/>
</dbReference>
<dbReference type="NCBIfam" id="NF002018">
    <property type="entry name" value="PRK00823.1-3"/>
    <property type="match status" value="1"/>
</dbReference>
<dbReference type="NCBIfam" id="NF002020">
    <property type="entry name" value="PRK00823.1-5"/>
    <property type="match status" value="1"/>
</dbReference>
<dbReference type="PANTHER" id="PTHR12599">
    <property type="entry name" value="PTERIN-4-ALPHA-CARBINOLAMINE DEHYDRATASE"/>
    <property type="match status" value="1"/>
</dbReference>
<dbReference type="PANTHER" id="PTHR12599:SF0">
    <property type="entry name" value="PTERIN-4-ALPHA-CARBINOLAMINE DEHYDRATASE"/>
    <property type="match status" value="1"/>
</dbReference>
<dbReference type="Pfam" id="PF01329">
    <property type="entry name" value="Pterin_4a"/>
    <property type="match status" value="1"/>
</dbReference>
<dbReference type="SUPFAM" id="SSF55248">
    <property type="entry name" value="PCD-like"/>
    <property type="match status" value="1"/>
</dbReference>
<evidence type="ECO:0000255" key="1">
    <source>
        <dbReference type="HAMAP-Rule" id="MF_00434"/>
    </source>
</evidence>
<organism>
    <name type="scientific">Burkholderia mallei (strain ATCC 23344)</name>
    <dbReference type="NCBI Taxonomy" id="243160"/>
    <lineage>
        <taxon>Bacteria</taxon>
        <taxon>Pseudomonadati</taxon>
        <taxon>Pseudomonadota</taxon>
        <taxon>Betaproteobacteria</taxon>
        <taxon>Burkholderiales</taxon>
        <taxon>Burkholderiaceae</taxon>
        <taxon>Burkholderia</taxon>
        <taxon>pseudomallei group</taxon>
    </lineage>
</organism>